<proteinExistence type="inferred from homology"/>
<sequence length="267" mass="30839">MKKILLTVSLGLALSACATQGTADKDAQITQDWSVEKLYAEAQDELNSSNYTRAVKLYEILESRFPTSRHARQSQLDTAYAYYKDDEKDKALAAIERFRRLHPQHPNMDYALYLRGLVLFNEDQSFLNKLASQDWSDRDPKANREAYQAFAELVQRFPNSKYAADATARMVKLVDALGGNEMSVARYYMKRGAYIAAANRAKKIIGSYQNTRYVEESLAILELAYKKLDKPQLAADTRRVLETNFPKSPFLTHAWQPDDMPWWRYWH</sequence>
<gene>
    <name evidence="1" type="primary">bamD</name>
    <name type="synonym">comL</name>
</gene>
<feature type="signal peptide" evidence="1">
    <location>
        <begin position="1"/>
        <end position="16"/>
    </location>
</feature>
<feature type="chain" id="PRO_0000036221" description="Outer membrane protein assembly factor BamD">
    <location>
        <begin position="17"/>
        <end position="267"/>
    </location>
</feature>
<feature type="lipid moiety-binding region" description="N-palmitoyl cysteine" evidence="1">
    <location>
        <position position="17"/>
    </location>
</feature>
<feature type="lipid moiety-binding region" description="S-diacylglycerol cysteine" evidence="1">
    <location>
        <position position="17"/>
    </location>
</feature>
<dbReference type="EMBL" id="Z49895">
    <property type="protein sequence ID" value="CAA90076.1"/>
    <property type="molecule type" value="Genomic_DNA"/>
</dbReference>
<dbReference type="PIR" id="S71020">
    <property type="entry name" value="S71020"/>
</dbReference>
<dbReference type="RefSeq" id="WP_003687645.1">
    <property type="nucleotide sequence ID" value="NZ_WHPL01000002.1"/>
</dbReference>
<dbReference type="SMR" id="Q50985"/>
<dbReference type="PATRIC" id="fig|485.45.peg.220"/>
<dbReference type="OMA" id="ERQHPYS"/>
<dbReference type="GO" id="GO:1990063">
    <property type="term" value="C:Bam protein complex"/>
    <property type="evidence" value="ECO:0007669"/>
    <property type="project" value="TreeGrafter"/>
</dbReference>
<dbReference type="GO" id="GO:0030420">
    <property type="term" value="P:establishment of competence for transformation"/>
    <property type="evidence" value="ECO:0007669"/>
    <property type="project" value="UniProtKB-KW"/>
</dbReference>
<dbReference type="GO" id="GO:0043165">
    <property type="term" value="P:Gram-negative-bacterium-type cell outer membrane assembly"/>
    <property type="evidence" value="ECO:0007669"/>
    <property type="project" value="UniProtKB-UniRule"/>
</dbReference>
<dbReference type="GO" id="GO:0051205">
    <property type="term" value="P:protein insertion into membrane"/>
    <property type="evidence" value="ECO:0007669"/>
    <property type="project" value="UniProtKB-UniRule"/>
</dbReference>
<dbReference type="CDD" id="cd15830">
    <property type="entry name" value="BamD"/>
    <property type="match status" value="1"/>
</dbReference>
<dbReference type="FunFam" id="1.25.40.10:FF:000587">
    <property type="entry name" value="Outer membrane protein assembly factor BamD"/>
    <property type="match status" value="1"/>
</dbReference>
<dbReference type="Gene3D" id="1.25.40.10">
    <property type="entry name" value="Tetratricopeptide repeat domain"/>
    <property type="match status" value="1"/>
</dbReference>
<dbReference type="HAMAP" id="MF_00922">
    <property type="entry name" value="OM_assembly_BamD"/>
    <property type="match status" value="1"/>
</dbReference>
<dbReference type="InterPro" id="IPR017689">
    <property type="entry name" value="BamD"/>
</dbReference>
<dbReference type="InterPro" id="IPR039565">
    <property type="entry name" value="BamD-like"/>
</dbReference>
<dbReference type="InterPro" id="IPR011990">
    <property type="entry name" value="TPR-like_helical_dom_sf"/>
</dbReference>
<dbReference type="NCBIfam" id="TIGR03302">
    <property type="entry name" value="OM_YfiO"/>
    <property type="match status" value="1"/>
</dbReference>
<dbReference type="PANTHER" id="PTHR37423:SF1">
    <property type="entry name" value="OUTER MEMBRANE PROTEIN ASSEMBLY FACTOR BAMD"/>
    <property type="match status" value="1"/>
</dbReference>
<dbReference type="PANTHER" id="PTHR37423">
    <property type="entry name" value="SOLUBLE LYTIC MUREIN TRANSGLYCOSYLASE-RELATED"/>
    <property type="match status" value="1"/>
</dbReference>
<dbReference type="Pfam" id="PF13525">
    <property type="entry name" value="YfiO"/>
    <property type="match status" value="1"/>
</dbReference>
<dbReference type="SUPFAM" id="SSF48452">
    <property type="entry name" value="TPR-like"/>
    <property type="match status" value="1"/>
</dbReference>
<dbReference type="PROSITE" id="PS51257">
    <property type="entry name" value="PROKAR_LIPOPROTEIN"/>
    <property type="match status" value="1"/>
</dbReference>
<protein>
    <recommendedName>
        <fullName evidence="1">Outer membrane protein assembly factor BamD</fullName>
    </recommendedName>
    <alternativeName>
        <fullName>Competence lipoprotein ComL</fullName>
    </alternativeName>
</protein>
<organism>
    <name type="scientific">Neisseria gonorrhoeae</name>
    <dbReference type="NCBI Taxonomy" id="485"/>
    <lineage>
        <taxon>Bacteria</taxon>
        <taxon>Pseudomonadati</taxon>
        <taxon>Pseudomonadota</taxon>
        <taxon>Betaproteobacteria</taxon>
        <taxon>Neisseriales</taxon>
        <taxon>Neisseriaceae</taxon>
        <taxon>Neisseria</taxon>
    </lineage>
</organism>
<evidence type="ECO:0000255" key="1">
    <source>
        <dbReference type="HAMAP-Rule" id="MF_00922"/>
    </source>
</evidence>
<evidence type="ECO:0000269" key="2">
    <source>
    </source>
</evidence>
<comment type="function">
    <text evidence="1 2">Part of the outer membrane protein assembly complex, which is involved in assembly and insertion of beta-barrel proteins into the outer membrane (By similarity). Required for efficient transformation of Neisseria gonorrhoeae by species-related DNA.</text>
</comment>
<comment type="subunit">
    <text evidence="1">Part of the Bam complex.</text>
</comment>
<comment type="subcellular location">
    <subcellularLocation>
        <location evidence="1">Cell outer membrane</location>
        <topology evidence="1">Lipid-anchor</topology>
    </subcellularLocation>
</comment>
<comment type="similarity">
    <text evidence="1">Belongs to the BamD family.</text>
</comment>
<name>BAMD_NEIGO</name>
<accession>Q50985</accession>
<reference key="1">
    <citation type="journal article" date="1996" name="Mol. Microbiol.">
        <title>A novel peptidoglycan-linked lipoprotein (ComL) that functions in natural transformation competence of Neisseria gonorrhoeae.</title>
        <authorList>
            <person name="Fussenegger M."/>
            <person name="Facius D."/>
            <person name="Meier J."/>
            <person name="Meyer T.F."/>
        </authorList>
    </citation>
    <scope>NUCLEOTIDE SEQUENCE [GENOMIC DNA]</scope>
    <scope>FUNCTION</scope>
    <source>
        <strain>MS11A</strain>
    </source>
</reference>
<keyword id="KW-0998">Cell outer membrane</keyword>
<keyword id="KW-0178">Competence</keyword>
<keyword id="KW-0449">Lipoprotein</keyword>
<keyword id="KW-0472">Membrane</keyword>
<keyword id="KW-0564">Palmitate</keyword>
<keyword id="KW-0732">Signal</keyword>